<reference key="1">
    <citation type="journal article" date="2008" name="J. Bacteriol.">
        <title>Genome sequence of a nephritogenic and highly transformable M49 strain of Streptococcus pyogenes.</title>
        <authorList>
            <person name="McShan W.M."/>
            <person name="Ferretti J.J."/>
            <person name="Karasawa T."/>
            <person name="Suvorov A.N."/>
            <person name="Lin S."/>
            <person name="Qin B."/>
            <person name="Jia H."/>
            <person name="Kenton S."/>
            <person name="Najar F."/>
            <person name="Wu H."/>
            <person name="Scott J."/>
            <person name="Roe B.A."/>
            <person name="Savic D.J."/>
        </authorList>
    </citation>
    <scope>NUCLEOTIDE SEQUENCE [LARGE SCALE GENOMIC DNA]</scope>
    <source>
        <strain>NZ131</strain>
    </source>
</reference>
<comment type="function">
    <text evidence="1">Catalyzes the NADPH-dependent reduction of L-glutamate 5-phosphate into L-glutamate 5-semialdehyde and phosphate. The product spontaneously undergoes cyclization to form 1-pyrroline-5-carboxylate.</text>
</comment>
<comment type="catalytic activity">
    <reaction evidence="1">
        <text>L-glutamate 5-semialdehyde + phosphate + NADP(+) = L-glutamyl 5-phosphate + NADPH + H(+)</text>
        <dbReference type="Rhea" id="RHEA:19541"/>
        <dbReference type="ChEBI" id="CHEBI:15378"/>
        <dbReference type="ChEBI" id="CHEBI:43474"/>
        <dbReference type="ChEBI" id="CHEBI:57783"/>
        <dbReference type="ChEBI" id="CHEBI:58066"/>
        <dbReference type="ChEBI" id="CHEBI:58274"/>
        <dbReference type="ChEBI" id="CHEBI:58349"/>
        <dbReference type="EC" id="1.2.1.41"/>
    </reaction>
</comment>
<comment type="pathway">
    <text evidence="1">Amino-acid biosynthesis; L-proline biosynthesis; L-glutamate 5-semialdehyde from L-glutamate: step 2/2.</text>
</comment>
<comment type="subcellular location">
    <subcellularLocation>
        <location evidence="1">Cytoplasm</location>
    </subcellularLocation>
</comment>
<comment type="similarity">
    <text evidence="1">Belongs to the gamma-glutamyl phosphate reductase family.</text>
</comment>
<gene>
    <name evidence="1" type="primary">proA</name>
    <name type="ordered locus">Spy49_1295c</name>
</gene>
<accession>B5XML5</accession>
<evidence type="ECO:0000255" key="1">
    <source>
        <dbReference type="HAMAP-Rule" id="MF_00412"/>
    </source>
</evidence>
<protein>
    <recommendedName>
        <fullName evidence="1">Gamma-glutamyl phosphate reductase</fullName>
        <shortName evidence="1">GPR</shortName>
        <ecNumber evidence="1">1.2.1.41</ecNumber>
    </recommendedName>
    <alternativeName>
        <fullName evidence="1">Glutamate-5-semialdehyde dehydrogenase</fullName>
    </alternativeName>
    <alternativeName>
        <fullName evidence="1">Glutamyl-gamma-semialdehyde dehydrogenase</fullName>
        <shortName evidence="1">GSA dehydrogenase</shortName>
    </alternativeName>
</protein>
<feature type="chain" id="PRO_1000193664" description="Gamma-glutamyl phosphate reductase">
    <location>
        <begin position="1"/>
        <end position="416"/>
    </location>
</feature>
<sequence>MTDMRRLGQRAKQASLLIAPLSTQIKNRFLSTLAKALVDDTQTLLAANQKDLANAKEHGISDIMMDRLRLTSERIKAMAQGVQQVADLADPIGQVIKGYTNLDGLKILQKRVPLGVIAMIFESRPNVSVDAFSLAFKTNNAIILRGGKDALHSNKALVKLIRQSLEKSGITPDAVQLVEDPSHAVAEELMQATDYVDVLIPRGGAKLIQTVKEKAKVPVIETGVGNVHIYVDAQADLDMATKIVINAKTKRPSVCNAAEGLVIHEAVAARFIPMLEKAINQVQPVEWRADDKALPLFEQAVPAKAEDFETEFLDYIMSVKVVSSLEEAIFWINQHTSHHSEAIITRDIKVAETFQDLVDAAAVYVNASTRFTDGFVFGLGAEIGISTQKMHARGPMGLEALTSTKFYINGDGHIRE</sequence>
<name>PROA_STRPZ</name>
<dbReference type="EC" id="1.2.1.41" evidence="1"/>
<dbReference type="EMBL" id="CP000829">
    <property type="protein sequence ID" value="ACI61577.1"/>
    <property type="molecule type" value="Genomic_DNA"/>
</dbReference>
<dbReference type="SMR" id="B5XML5"/>
<dbReference type="KEGG" id="soz:Spy49_1295c"/>
<dbReference type="HOGENOM" id="CLU_030231_0_0_9"/>
<dbReference type="UniPathway" id="UPA00098">
    <property type="reaction ID" value="UER00360"/>
</dbReference>
<dbReference type="Proteomes" id="UP000001039">
    <property type="component" value="Chromosome"/>
</dbReference>
<dbReference type="GO" id="GO:0005737">
    <property type="term" value="C:cytoplasm"/>
    <property type="evidence" value="ECO:0007669"/>
    <property type="project" value="UniProtKB-SubCell"/>
</dbReference>
<dbReference type="GO" id="GO:0004350">
    <property type="term" value="F:glutamate-5-semialdehyde dehydrogenase activity"/>
    <property type="evidence" value="ECO:0007669"/>
    <property type="project" value="UniProtKB-UniRule"/>
</dbReference>
<dbReference type="GO" id="GO:0050661">
    <property type="term" value="F:NADP binding"/>
    <property type="evidence" value="ECO:0007669"/>
    <property type="project" value="InterPro"/>
</dbReference>
<dbReference type="GO" id="GO:0055129">
    <property type="term" value="P:L-proline biosynthetic process"/>
    <property type="evidence" value="ECO:0007669"/>
    <property type="project" value="UniProtKB-UniRule"/>
</dbReference>
<dbReference type="CDD" id="cd07079">
    <property type="entry name" value="ALDH_F18-19_ProA-GPR"/>
    <property type="match status" value="1"/>
</dbReference>
<dbReference type="FunFam" id="3.40.309.10:FF:000006">
    <property type="entry name" value="Gamma-glutamyl phosphate reductase"/>
    <property type="match status" value="1"/>
</dbReference>
<dbReference type="Gene3D" id="3.40.605.10">
    <property type="entry name" value="Aldehyde Dehydrogenase, Chain A, domain 1"/>
    <property type="match status" value="1"/>
</dbReference>
<dbReference type="Gene3D" id="3.40.309.10">
    <property type="entry name" value="Aldehyde Dehydrogenase, Chain A, domain 2"/>
    <property type="match status" value="1"/>
</dbReference>
<dbReference type="HAMAP" id="MF_00412">
    <property type="entry name" value="ProA"/>
    <property type="match status" value="1"/>
</dbReference>
<dbReference type="InterPro" id="IPR016161">
    <property type="entry name" value="Ald_DH/histidinol_DH"/>
</dbReference>
<dbReference type="InterPro" id="IPR016163">
    <property type="entry name" value="Ald_DH_C"/>
</dbReference>
<dbReference type="InterPro" id="IPR016162">
    <property type="entry name" value="Ald_DH_N"/>
</dbReference>
<dbReference type="InterPro" id="IPR015590">
    <property type="entry name" value="Aldehyde_DH_dom"/>
</dbReference>
<dbReference type="InterPro" id="IPR020593">
    <property type="entry name" value="G-glutamylP_reductase_CS"/>
</dbReference>
<dbReference type="InterPro" id="IPR012134">
    <property type="entry name" value="Glu-5-SA_DH"/>
</dbReference>
<dbReference type="InterPro" id="IPR000965">
    <property type="entry name" value="GPR_dom"/>
</dbReference>
<dbReference type="NCBIfam" id="NF001221">
    <property type="entry name" value="PRK00197.1"/>
    <property type="match status" value="1"/>
</dbReference>
<dbReference type="NCBIfam" id="TIGR00407">
    <property type="entry name" value="proA"/>
    <property type="match status" value="1"/>
</dbReference>
<dbReference type="PANTHER" id="PTHR11063:SF8">
    <property type="entry name" value="DELTA-1-PYRROLINE-5-CARBOXYLATE SYNTHASE"/>
    <property type="match status" value="1"/>
</dbReference>
<dbReference type="PANTHER" id="PTHR11063">
    <property type="entry name" value="GLUTAMATE SEMIALDEHYDE DEHYDROGENASE"/>
    <property type="match status" value="1"/>
</dbReference>
<dbReference type="Pfam" id="PF00171">
    <property type="entry name" value="Aldedh"/>
    <property type="match status" value="2"/>
</dbReference>
<dbReference type="PIRSF" id="PIRSF000151">
    <property type="entry name" value="GPR"/>
    <property type="match status" value="1"/>
</dbReference>
<dbReference type="SUPFAM" id="SSF53720">
    <property type="entry name" value="ALDH-like"/>
    <property type="match status" value="1"/>
</dbReference>
<dbReference type="PROSITE" id="PS01223">
    <property type="entry name" value="PROA"/>
    <property type="match status" value="1"/>
</dbReference>
<keyword id="KW-0028">Amino-acid biosynthesis</keyword>
<keyword id="KW-0963">Cytoplasm</keyword>
<keyword id="KW-0521">NADP</keyword>
<keyword id="KW-0560">Oxidoreductase</keyword>
<keyword id="KW-0641">Proline biosynthesis</keyword>
<organism>
    <name type="scientific">Streptococcus pyogenes serotype M49 (strain NZ131)</name>
    <dbReference type="NCBI Taxonomy" id="471876"/>
    <lineage>
        <taxon>Bacteria</taxon>
        <taxon>Bacillati</taxon>
        <taxon>Bacillota</taxon>
        <taxon>Bacilli</taxon>
        <taxon>Lactobacillales</taxon>
        <taxon>Streptococcaceae</taxon>
        <taxon>Streptococcus</taxon>
    </lineage>
</organism>
<proteinExistence type="inferred from homology"/>